<dbReference type="EMBL" id="AB188388">
    <property type="protein sequence ID" value="BAE07162.1"/>
    <property type="molecule type" value="mRNA"/>
</dbReference>
<dbReference type="RefSeq" id="NP_001007176.1">
    <property type="nucleotide sequence ID" value="NM_001007175.2"/>
</dbReference>
<dbReference type="SMR" id="Q4H4B6"/>
<dbReference type="FunCoup" id="Q4H4B6">
    <property type="interactions" value="1728"/>
</dbReference>
<dbReference type="STRING" id="7955.ENSDARP00000068701"/>
<dbReference type="iPTMnet" id="Q4H4B6"/>
<dbReference type="PaxDb" id="7955-ENSDARP00000068701"/>
<dbReference type="Ensembl" id="ENSDART00000074212">
    <property type="protein sequence ID" value="ENSDARP00000068701"/>
    <property type="gene ID" value="ENSDARG00000000861"/>
</dbReference>
<dbReference type="GeneID" id="368473"/>
<dbReference type="KEGG" id="dre:368473"/>
<dbReference type="AGR" id="ZFIN:ZDB-GENE-030616-572"/>
<dbReference type="CTD" id="23513"/>
<dbReference type="ZFIN" id="ZDB-GENE-030616-572">
    <property type="gene designation" value="scrib"/>
</dbReference>
<dbReference type="eggNOG" id="KOG0619">
    <property type="taxonomic scope" value="Eukaryota"/>
</dbReference>
<dbReference type="InParanoid" id="Q4H4B6"/>
<dbReference type="OrthoDB" id="676979at2759"/>
<dbReference type="PhylomeDB" id="Q4H4B6"/>
<dbReference type="TreeFam" id="TF351429"/>
<dbReference type="Reactome" id="R-DRE-9013406">
    <property type="pathway name" value="RHOQ GTPase cycle"/>
</dbReference>
<dbReference type="Reactome" id="R-DRE-9696264">
    <property type="pathway name" value="RND3 GTPase cycle"/>
</dbReference>
<dbReference type="Reactome" id="R-DRE-9696270">
    <property type="pathway name" value="RND2 GTPase cycle"/>
</dbReference>
<dbReference type="PRO" id="PR:Q4H4B6"/>
<dbReference type="Proteomes" id="UP000000437">
    <property type="component" value="Chromosome 7"/>
</dbReference>
<dbReference type="Bgee" id="ENSDARG00000000861">
    <property type="expression patterns" value="Expressed in muscle tissue and 27 other cell types or tissues"/>
</dbReference>
<dbReference type="ExpressionAtlas" id="Q4H4B6">
    <property type="expression patterns" value="baseline"/>
</dbReference>
<dbReference type="GO" id="GO:0005912">
    <property type="term" value="C:adherens junction"/>
    <property type="evidence" value="ECO:0000250"/>
    <property type="project" value="UniProtKB"/>
</dbReference>
<dbReference type="GO" id="GO:0016323">
    <property type="term" value="C:basolateral plasma membrane"/>
    <property type="evidence" value="ECO:0000318"/>
    <property type="project" value="GO_Central"/>
</dbReference>
<dbReference type="GO" id="GO:0005911">
    <property type="term" value="C:cell-cell junction"/>
    <property type="evidence" value="ECO:0000250"/>
    <property type="project" value="UniProtKB"/>
</dbReference>
<dbReference type="GO" id="GO:0005737">
    <property type="term" value="C:cytoplasm"/>
    <property type="evidence" value="ECO:0007669"/>
    <property type="project" value="UniProtKB-SubCell"/>
</dbReference>
<dbReference type="GO" id="GO:0030027">
    <property type="term" value="C:lamellipodium"/>
    <property type="evidence" value="ECO:0007669"/>
    <property type="project" value="UniProtKB-SubCell"/>
</dbReference>
<dbReference type="GO" id="GO:0016020">
    <property type="term" value="C:membrane"/>
    <property type="evidence" value="ECO:0000314"/>
    <property type="project" value="ZFIN"/>
</dbReference>
<dbReference type="GO" id="GO:0005886">
    <property type="term" value="C:plasma membrane"/>
    <property type="evidence" value="ECO:0000250"/>
    <property type="project" value="UniProtKB"/>
</dbReference>
<dbReference type="GO" id="GO:0014069">
    <property type="term" value="C:postsynaptic density"/>
    <property type="evidence" value="ECO:0000318"/>
    <property type="project" value="GO_Central"/>
</dbReference>
<dbReference type="GO" id="GO:0098793">
    <property type="term" value="C:presynapse"/>
    <property type="evidence" value="ECO:0007669"/>
    <property type="project" value="UniProtKB-SubCell"/>
</dbReference>
<dbReference type="GO" id="GO:0046982">
    <property type="term" value="F:protein heterodimerization activity"/>
    <property type="evidence" value="ECO:0000353"/>
    <property type="project" value="ZFIN"/>
</dbReference>
<dbReference type="GO" id="GO:0019901">
    <property type="term" value="F:protein kinase binding"/>
    <property type="evidence" value="ECO:0000318"/>
    <property type="project" value="GO_Central"/>
</dbReference>
<dbReference type="GO" id="GO:0090630">
    <property type="term" value="P:activation of GTPase activity"/>
    <property type="evidence" value="ECO:0000250"/>
    <property type="project" value="UniProtKB"/>
</dbReference>
<dbReference type="GO" id="GO:0033564">
    <property type="term" value="P:anterior/posterior axon guidance"/>
    <property type="evidence" value="ECO:0000315"/>
    <property type="project" value="ZFIN"/>
</dbReference>
<dbReference type="GO" id="GO:0060561">
    <property type="term" value="P:apoptotic process involved in morphogenesis"/>
    <property type="evidence" value="ECO:0000250"/>
    <property type="project" value="UniProtKB"/>
</dbReference>
<dbReference type="GO" id="GO:0016477">
    <property type="term" value="P:cell migration"/>
    <property type="evidence" value="ECO:0000250"/>
    <property type="project" value="UniProtKB"/>
</dbReference>
<dbReference type="GO" id="GO:0008283">
    <property type="term" value="P:cell population proliferation"/>
    <property type="evidence" value="ECO:0000250"/>
    <property type="project" value="UniProtKB"/>
</dbReference>
<dbReference type="GO" id="GO:0098609">
    <property type="term" value="P:cell-cell adhesion"/>
    <property type="evidence" value="ECO:0000250"/>
    <property type="project" value="UniProtKB"/>
</dbReference>
<dbReference type="GO" id="GO:0071679">
    <property type="term" value="P:commissural neuron axon guidance"/>
    <property type="evidence" value="ECO:0000315"/>
    <property type="project" value="ZFIN"/>
</dbReference>
<dbReference type="GO" id="GO:0060027">
    <property type="term" value="P:convergent extension involved in gastrulation"/>
    <property type="evidence" value="ECO:0000316"/>
    <property type="project" value="ZFIN"/>
</dbReference>
<dbReference type="GO" id="GO:0035089">
    <property type="term" value="P:establishment of apical/basal cell polarity"/>
    <property type="evidence" value="ECO:0000250"/>
    <property type="project" value="UniProtKB"/>
</dbReference>
<dbReference type="GO" id="GO:0000132">
    <property type="term" value="P:establishment of mitotic spindle orientation"/>
    <property type="evidence" value="ECO:0000315"/>
    <property type="project" value="ZFIN"/>
</dbReference>
<dbReference type="GO" id="GO:0001736">
    <property type="term" value="P:establishment of planar polarity"/>
    <property type="evidence" value="ECO:0000315"/>
    <property type="project" value="ZFIN"/>
</dbReference>
<dbReference type="GO" id="GO:0045197">
    <property type="term" value="P:establishment or maintenance of epithelial cell apical/basal polarity"/>
    <property type="evidence" value="ECO:0000318"/>
    <property type="project" value="GO_Central"/>
</dbReference>
<dbReference type="GO" id="GO:0097475">
    <property type="term" value="P:motor neuron migration"/>
    <property type="evidence" value="ECO:0000316"/>
    <property type="project" value="ZFIN"/>
</dbReference>
<dbReference type="GO" id="GO:0045930">
    <property type="term" value="P:negative regulation of mitotic cell cycle"/>
    <property type="evidence" value="ECO:0000250"/>
    <property type="project" value="UniProtKB"/>
</dbReference>
<dbReference type="GO" id="GO:0001841">
    <property type="term" value="P:neural tube formation"/>
    <property type="evidence" value="ECO:0000315"/>
    <property type="project" value="ZFIN"/>
</dbReference>
<dbReference type="GO" id="GO:0048884">
    <property type="term" value="P:neuromast development"/>
    <property type="evidence" value="ECO:0000315"/>
    <property type="project" value="ZFIN"/>
</dbReference>
<dbReference type="GO" id="GO:0001764">
    <property type="term" value="P:neuron migration"/>
    <property type="evidence" value="ECO:0000315"/>
    <property type="project" value="ZFIN"/>
</dbReference>
<dbReference type="GO" id="GO:0098887">
    <property type="term" value="P:neurotransmitter receptor transport, endosome to postsynaptic membrane"/>
    <property type="evidence" value="ECO:0000318"/>
    <property type="project" value="GO_Central"/>
</dbReference>
<dbReference type="GO" id="GO:0050918">
    <property type="term" value="P:positive chemotaxis"/>
    <property type="evidence" value="ECO:0000250"/>
    <property type="project" value="UniProtKB"/>
</dbReference>
<dbReference type="GO" id="GO:0043065">
    <property type="term" value="P:positive regulation of apoptotic process"/>
    <property type="evidence" value="ECO:0000250"/>
    <property type="project" value="UniProtKB"/>
</dbReference>
<dbReference type="GO" id="GO:0043113">
    <property type="term" value="P:receptor clustering"/>
    <property type="evidence" value="ECO:0000318"/>
    <property type="project" value="GO_Central"/>
</dbReference>
<dbReference type="GO" id="GO:0001944">
    <property type="term" value="P:vasculature development"/>
    <property type="evidence" value="ECO:0000315"/>
    <property type="project" value="ZFIN"/>
</dbReference>
<dbReference type="CDD" id="cd06704">
    <property type="entry name" value="PDZ1_Scribble-like"/>
    <property type="match status" value="1"/>
</dbReference>
<dbReference type="CDD" id="cd06703">
    <property type="entry name" value="PDZ2_Scribble-like"/>
    <property type="match status" value="1"/>
</dbReference>
<dbReference type="CDD" id="cd06702">
    <property type="entry name" value="PDZ3_Scribble-like"/>
    <property type="match status" value="1"/>
</dbReference>
<dbReference type="CDD" id="cd06701">
    <property type="entry name" value="PDZ4_Scribble-like"/>
    <property type="match status" value="1"/>
</dbReference>
<dbReference type="FunFam" id="2.30.42.10:FF:000064">
    <property type="entry name" value="protein lap4 isoform X1"/>
    <property type="match status" value="1"/>
</dbReference>
<dbReference type="FunFam" id="2.30.42.10:FF:000041">
    <property type="entry name" value="protein scribble homolog isoform X1"/>
    <property type="match status" value="1"/>
</dbReference>
<dbReference type="FunFam" id="2.30.42.10:FF:000114">
    <property type="entry name" value="protein scribble homolog isoform X1"/>
    <property type="match status" value="1"/>
</dbReference>
<dbReference type="FunFam" id="3.80.10.10:FF:000036">
    <property type="entry name" value="protein scribble homolog isoform X1"/>
    <property type="match status" value="1"/>
</dbReference>
<dbReference type="FunFam" id="3.80.10.10:FF:000072">
    <property type="entry name" value="protein scribble homolog isoform X1"/>
    <property type="match status" value="1"/>
</dbReference>
<dbReference type="FunFam" id="2.30.42.10:FF:000074">
    <property type="entry name" value="protein scribble homolog isoform X2"/>
    <property type="match status" value="1"/>
</dbReference>
<dbReference type="FunFam" id="3.80.10.10:FF:000202">
    <property type="entry name" value="protein scribble homolog isoform X2"/>
    <property type="match status" value="1"/>
</dbReference>
<dbReference type="FunFam" id="3.80.10.10:FF:000064">
    <property type="entry name" value="Scribbled planar cell polarity protein"/>
    <property type="match status" value="1"/>
</dbReference>
<dbReference type="Gene3D" id="2.30.42.10">
    <property type="match status" value="4"/>
</dbReference>
<dbReference type="Gene3D" id="3.80.10.10">
    <property type="entry name" value="Ribonuclease Inhibitor"/>
    <property type="match status" value="4"/>
</dbReference>
<dbReference type="InterPro" id="IPR001611">
    <property type="entry name" value="Leu-rich_rpt"/>
</dbReference>
<dbReference type="InterPro" id="IPR003591">
    <property type="entry name" value="Leu-rich_rpt_typical-subtyp"/>
</dbReference>
<dbReference type="InterPro" id="IPR032675">
    <property type="entry name" value="LRR_dom_sf"/>
</dbReference>
<dbReference type="InterPro" id="IPR055414">
    <property type="entry name" value="LRR_R13L4/SHOC2-like"/>
</dbReference>
<dbReference type="InterPro" id="IPR001478">
    <property type="entry name" value="PDZ"/>
</dbReference>
<dbReference type="InterPro" id="IPR036034">
    <property type="entry name" value="PDZ_sf"/>
</dbReference>
<dbReference type="InterPro" id="IPR050614">
    <property type="entry name" value="Synaptic_Scaffolding_LAP-MAGUK"/>
</dbReference>
<dbReference type="PANTHER" id="PTHR23119">
    <property type="entry name" value="DISCS LARGE"/>
    <property type="match status" value="1"/>
</dbReference>
<dbReference type="PANTHER" id="PTHR23119:SF57">
    <property type="entry name" value="PROTEIN SCRIBBLE HOMOLOG"/>
    <property type="match status" value="1"/>
</dbReference>
<dbReference type="Pfam" id="PF23598">
    <property type="entry name" value="LRR_14"/>
    <property type="match status" value="1"/>
</dbReference>
<dbReference type="Pfam" id="PF13855">
    <property type="entry name" value="LRR_8"/>
    <property type="match status" value="1"/>
</dbReference>
<dbReference type="Pfam" id="PF00595">
    <property type="entry name" value="PDZ"/>
    <property type="match status" value="4"/>
</dbReference>
<dbReference type="SMART" id="SM00364">
    <property type="entry name" value="LRR_BAC"/>
    <property type="match status" value="13"/>
</dbReference>
<dbReference type="SMART" id="SM00369">
    <property type="entry name" value="LRR_TYP"/>
    <property type="match status" value="13"/>
</dbReference>
<dbReference type="SMART" id="SM00228">
    <property type="entry name" value="PDZ"/>
    <property type="match status" value="4"/>
</dbReference>
<dbReference type="SUPFAM" id="SSF52058">
    <property type="entry name" value="L domain-like"/>
    <property type="match status" value="2"/>
</dbReference>
<dbReference type="SUPFAM" id="SSF50156">
    <property type="entry name" value="PDZ domain-like"/>
    <property type="match status" value="4"/>
</dbReference>
<dbReference type="PROSITE" id="PS51450">
    <property type="entry name" value="LRR"/>
    <property type="match status" value="15"/>
</dbReference>
<dbReference type="PROSITE" id="PS50106">
    <property type="entry name" value="PDZ"/>
    <property type="match status" value="4"/>
</dbReference>
<organism>
    <name type="scientific">Danio rerio</name>
    <name type="common">Zebrafish</name>
    <name type="synonym">Brachydanio rerio</name>
    <dbReference type="NCBI Taxonomy" id="7955"/>
    <lineage>
        <taxon>Eukaryota</taxon>
        <taxon>Metazoa</taxon>
        <taxon>Chordata</taxon>
        <taxon>Craniata</taxon>
        <taxon>Vertebrata</taxon>
        <taxon>Euteleostomi</taxon>
        <taxon>Actinopterygii</taxon>
        <taxon>Neopterygii</taxon>
        <taxon>Teleostei</taxon>
        <taxon>Ostariophysi</taxon>
        <taxon>Cypriniformes</taxon>
        <taxon>Danionidae</taxon>
        <taxon>Danioninae</taxon>
        <taxon>Danio</taxon>
    </lineage>
</organism>
<gene>
    <name type="primary">scrib</name>
    <name type="synonym">llk</name>
    <name type="synonym">scrb1</name>
</gene>
<reference key="1">
    <citation type="journal article" date="2005" name="Development">
        <title>Dual roles of zygotic and maternal Scribble1 in neural migration and convergent extension movements in zebrafish embryos.</title>
        <authorList>
            <person name="Wada H."/>
            <person name="Iwasaki M."/>
            <person name="Sato T."/>
            <person name="Masai I."/>
            <person name="Nishiwaki Y."/>
            <person name="Tanaka H."/>
            <person name="Sato A."/>
            <person name="Nojima Y."/>
            <person name="Okamoto H."/>
        </authorList>
    </citation>
    <scope>NUCLEOTIDE SEQUENCE [MRNA]</scope>
    <scope>FUNCTION</scope>
    <scope>SUBCELLULAR LOCATION</scope>
    <scope>DEVELOPMENTAL STAGE</scope>
</reference>
<reference key="2">
    <citation type="journal article" date="2008" name="J. Proteome Res.">
        <title>Online automated in vivo zebrafish phosphoproteomics: from large-scale analysis down to a single embryo.</title>
        <authorList>
            <person name="Lemeer S."/>
            <person name="Pinkse M.W.H."/>
            <person name="Mohammed S."/>
            <person name="van Breukelen B."/>
            <person name="den Hertog J."/>
            <person name="Slijper M."/>
            <person name="Heck A.J.R."/>
        </authorList>
    </citation>
    <scope>PHOSPHORYLATION [LARGE SCALE ANALYSIS] AT SER-1609</scope>
    <scope>IDENTIFICATION BY MASS SPECTROMETRY</scope>
    <source>
        <tissue>Embryo</tissue>
    </source>
</reference>
<name>SCRIB_DANRE</name>
<protein>
    <recommendedName>
        <fullName>Protein scribble homolog</fullName>
    </recommendedName>
    <alternativeName>
        <fullName>Scribble1</fullName>
    </alternativeName>
</protein>
<accession>Q4H4B6</accession>
<evidence type="ECO:0000250" key="1"/>
<evidence type="ECO:0000250" key="2">
    <source>
        <dbReference type="UniProtKB" id="Q14160"/>
    </source>
</evidence>
<evidence type="ECO:0000255" key="3"/>
<evidence type="ECO:0000255" key="4">
    <source>
        <dbReference type="PROSITE-ProRule" id="PRU00143"/>
    </source>
</evidence>
<evidence type="ECO:0000256" key="5">
    <source>
        <dbReference type="SAM" id="MobiDB-lite"/>
    </source>
</evidence>
<evidence type="ECO:0000269" key="6">
    <source>
    </source>
</evidence>
<evidence type="ECO:0000269" key="7">
    <source>
    </source>
</evidence>
<sequence length="1724" mass="189519">MLKCIPLWRCNRHVESVDKRHCSLTAVPDEIYRYNRSLEELLLDANQLRELPKPFFRLHNLRKLGLSDNEIQKLPPDVANFTQLVELDISRNDISEIPENIKFCQSLEIADFSGNPLTRLPDGFTQLRGLAHLSLNDVSLQSLPNDIGNLSNLVTLELRENLLKSLPSSLSFLVKLEQLDLGSNVLEVLPDTLGALPNLRELWLDRNQLSSLPPELGNLRQLVCLDVSENRLSELPTEISGLIALTDLLLSENLLEILPDSIGSLKKLSILKVNQNRLVHLTDSIGECENLTELMLTENLLQSLPRSLGKLKKLTNLNVDRNRLSSVPAELGGCVSLNVLSLRDNRLGKLPPELANATELHVLDVAGNRLQNLPFALANLNLKAMWLAENQSQPMLKFQTEDDEQTGEKVLTCYLLPQQPSSSLENLLERSVDEAWPTDTNLNRVSVIQFRDDSKHEEEDDETAADKRGLQRRATPHPSELKVMKNVIEARRNEAYTARPDEDLESPDAEEKRLSGLSNQSHDSQASSSTTSATSHEDKQGINSTGVELNDGQVQEEEDLDEMEVEYTEPTVHFAEEPIIRGGDEDDDYDNDDDDAERSDEVSQTPSFPAEKQRLIRKDTPHYKKHFKITKLPKPETVAALLQGFSHDGLSPTAHTPENERDGEDDEEEEEDEDEEDDLHTPFQHRLDAAELEDIRMSQMNSSLQPVKGVSFDQVNNLLIEPARIEEEELTLSILRQTGGLGISIAGGKGSTPYKGDDEGIFISRVSEEGPAARAGVKVGDKLLEVNGVDLHGAEHHTAVEALRNSGAAVVMTVLRERMVEPENAITTTPLRPEDDYFPRERRSSGLPFLLDPDCPAVSTGPAQRLATCLIRNDKGLGFSIAGGKGSTLYRVGDTGIFISRIAEGGAAHRDNILQVGDRVISINGVDMTEARHDQAVALLTGTSPTITLVVDREQSSVGGASPRTRPHSPPPPEPSDSPEQEDGGDEHLGNHLNCPMEDEYPIEEVTLIKAGGPLGLSIVGGSDHASHPFGINEPGVFISKVIPNGLASQSGLRVGDRILEVNSIDLRHATHQEAVRALLSNKQEIRMLVRRDPSPPGMQEIVIHKQPGEKLGISIRGGAKGHAGNPFDPTDEGIFISKVSSNGAAARDGRLRVGMRILEVGNNSLLGMTHTEAVRVLRASGDSLVMLICDGFDPKSASTIEASPGVIANPFAAGIVRKNSMESISSVDRDLSPEEIDIMQKEVEMVRETSQWEREEMEKVSLSSGPLKLDYKTLAALPTTSLQKVNRASPSEPFRIDSPVRDAAHSPHNSQSNIHFPSNANTKDNASTKPGAIQPLSRVRPPVSPASQDGHSSPNPFQHGLSPINSQTTDLYSPRNNVSAKQPSPETPSPLGRHSPEQRSFKDRQKYFEIDVKQQTPDKPKPRISLVGEDDLKKMKEEEAKRIEQRAREFMLDEDEEEEEEDLAKQVAHMKAHGKVVLDGVEYKVESLGSPTSRQCATPPNYSATPPSHCGSSGPSSIDGKGDSQRNSVEDSFRLEQRPNSMTGLIPVYPGESAAPIRTAKAERRHQDRLRMQSPELTVALDKELSPAEKRALEAEKRAMWRAARMKSLEQDALKAQMVIAKSKEGKKRGTLDQLSESPSPAPTPSPTPMEDISPRTVTSPGRLSPGAADDVHFMDESSSNAVSVIDPEVPVAATSALEEMALYSNKRKLRQGRRSLEAPVPT</sequence>
<proteinExistence type="evidence at protein level"/>
<keyword id="KW-0965">Cell junction</keyword>
<keyword id="KW-1003">Cell membrane</keyword>
<keyword id="KW-0966">Cell projection</keyword>
<keyword id="KW-0175">Coiled coil</keyword>
<keyword id="KW-0963">Cytoplasm</keyword>
<keyword id="KW-0217">Developmental protein</keyword>
<keyword id="KW-0221">Differentiation</keyword>
<keyword id="KW-0433">Leucine-rich repeat</keyword>
<keyword id="KW-0449">Lipoprotein</keyword>
<keyword id="KW-0472">Membrane</keyword>
<keyword id="KW-0564">Palmitate</keyword>
<keyword id="KW-0597">Phosphoprotein</keyword>
<keyword id="KW-1185">Reference proteome</keyword>
<keyword id="KW-0677">Repeat</keyword>
<keyword id="KW-0770">Synapse</keyword>
<feature type="chain" id="PRO_0000385516" description="Protein scribble homolog">
    <location>
        <begin position="1"/>
        <end position="1724"/>
    </location>
</feature>
<feature type="repeat" description="LRR 1">
    <location>
        <begin position="11"/>
        <end position="34"/>
    </location>
</feature>
<feature type="repeat" description="LRR 2">
    <location>
        <begin position="35"/>
        <end position="58"/>
    </location>
</feature>
<feature type="repeat" description="LRR 3">
    <location>
        <begin position="59"/>
        <end position="81"/>
    </location>
</feature>
<feature type="repeat" description="LRR 4">
    <location>
        <begin position="83"/>
        <end position="105"/>
    </location>
</feature>
<feature type="repeat" description="LRR 5">
    <location>
        <begin position="107"/>
        <end position="127"/>
    </location>
</feature>
<feature type="repeat" description="LRR 6">
    <location>
        <begin position="128"/>
        <end position="150"/>
    </location>
</feature>
<feature type="repeat" description="LRR 7">
    <location>
        <begin position="151"/>
        <end position="174"/>
    </location>
</feature>
<feature type="repeat" description="LRR 8">
    <location>
        <begin position="176"/>
        <end position="196"/>
    </location>
</feature>
<feature type="repeat" description="LRR 9">
    <location>
        <begin position="197"/>
        <end position="219"/>
    </location>
</feature>
<feature type="repeat" description="LRR 10">
    <location>
        <begin position="221"/>
        <end position="242"/>
    </location>
</feature>
<feature type="repeat" description="LRR 11">
    <location>
        <begin position="244"/>
        <end position="265"/>
    </location>
</feature>
<feature type="repeat" description="LRR 12">
    <location>
        <begin position="266"/>
        <end position="288"/>
    </location>
</feature>
<feature type="repeat" description="LRR 13">
    <location>
        <begin position="289"/>
        <end position="311"/>
    </location>
</feature>
<feature type="repeat" description="LRR 14">
    <location>
        <begin position="312"/>
        <end position="334"/>
    </location>
</feature>
<feature type="repeat" description="LRR 15">
    <location>
        <begin position="336"/>
        <end position="357"/>
    </location>
</feature>
<feature type="repeat" description="LRR 16">
    <location>
        <begin position="359"/>
        <end position="380"/>
    </location>
</feature>
<feature type="repeat" description="LRR 17">
    <location>
        <begin position="382"/>
        <end position="405"/>
    </location>
</feature>
<feature type="domain" description="PDZ 1" evidence="4">
    <location>
        <begin position="731"/>
        <end position="818"/>
    </location>
</feature>
<feature type="domain" description="PDZ 2" evidence="4">
    <location>
        <begin position="867"/>
        <end position="955"/>
    </location>
</feature>
<feature type="domain" description="PDZ 3" evidence="4">
    <location>
        <begin position="1005"/>
        <end position="1094"/>
    </location>
</feature>
<feature type="domain" description="PDZ 4" evidence="4">
    <location>
        <begin position="1101"/>
        <end position="1193"/>
    </location>
</feature>
<feature type="region of interest" description="Sufficient for targeting to adherens junction" evidence="1">
    <location>
        <begin position="1"/>
        <end position="821"/>
    </location>
</feature>
<feature type="region of interest" description="Disordered" evidence="5">
    <location>
        <begin position="451"/>
        <end position="484"/>
    </location>
</feature>
<feature type="region of interest" description="Disordered" evidence="5">
    <location>
        <begin position="496"/>
        <end position="620"/>
    </location>
</feature>
<feature type="region of interest" description="Disordered" evidence="5">
    <location>
        <begin position="646"/>
        <end position="683"/>
    </location>
</feature>
<feature type="region of interest" description="Disordered" evidence="5">
    <location>
        <begin position="955"/>
        <end position="995"/>
    </location>
</feature>
<feature type="region of interest" description="Disordered" evidence="5">
    <location>
        <begin position="1283"/>
        <end position="1407"/>
    </location>
</feature>
<feature type="region of interest" description="Disordered" evidence="5">
    <location>
        <begin position="1414"/>
        <end position="1433"/>
    </location>
</feature>
<feature type="region of interest" description="Disordered" evidence="5">
    <location>
        <begin position="1449"/>
        <end position="1468"/>
    </location>
</feature>
<feature type="region of interest" description="Disordered" evidence="5">
    <location>
        <begin position="1488"/>
        <end position="1555"/>
    </location>
</feature>
<feature type="region of interest" description="Disordered" evidence="5">
    <location>
        <begin position="1621"/>
        <end position="1684"/>
    </location>
</feature>
<feature type="coiled-coil region" evidence="3">
    <location>
        <begin position="1430"/>
        <end position="1461"/>
    </location>
</feature>
<feature type="compositionally biased region" description="Low complexity" evidence="5">
    <location>
        <begin position="518"/>
        <end position="534"/>
    </location>
</feature>
<feature type="compositionally biased region" description="Acidic residues" evidence="5">
    <location>
        <begin position="554"/>
        <end position="567"/>
    </location>
</feature>
<feature type="compositionally biased region" description="Basic and acidic residues" evidence="5">
    <location>
        <begin position="574"/>
        <end position="583"/>
    </location>
</feature>
<feature type="compositionally biased region" description="Acidic residues" evidence="5">
    <location>
        <begin position="584"/>
        <end position="598"/>
    </location>
</feature>
<feature type="compositionally biased region" description="Basic and acidic residues" evidence="5">
    <location>
        <begin position="611"/>
        <end position="620"/>
    </location>
</feature>
<feature type="compositionally biased region" description="Acidic residues" evidence="5">
    <location>
        <begin position="661"/>
        <end position="678"/>
    </location>
</feature>
<feature type="compositionally biased region" description="Basic and acidic residues" evidence="5">
    <location>
        <begin position="1295"/>
        <end position="1306"/>
    </location>
</feature>
<feature type="compositionally biased region" description="Polar residues" evidence="5">
    <location>
        <begin position="1308"/>
        <end position="1329"/>
    </location>
</feature>
<feature type="compositionally biased region" description="Polar residues" evidence="5">
    <location>
        <begin position="1346"/>
        <end position="1357"/>
    </location>
</feature>
<feature type="compositionally biased region" description="Polar residues" evidence="5">
    <location>
        <begin position="1364"/>
        <end position="1385"/>
    </location>
</feature>
<feature type="compositionally biased region" description="Basic and acidic residues" evidence="5">
    <location>
        <begin position="1395"/>
        <end position="1407"/>
    </location>
</feature>
<feature type="compositionally biased region" description="Acidic residues" evidence="5">
    <location>
        <begin position="1453"/>
        <end position="1463"/>
    </location>
</feature>
<feature type="compositionally biased region" description="Polar residues" evidence="5">
    <location>
        <begin position="1490"/>
        <end position="1506"/>
    </location>
</feature>
<feature type="compositionally biased region" description="Low complexity" evidence="5">
    <location>
        <begin position="1507"/>
        <end position="1518"/>
    </location>
</feature>
<feature type="compositionally biased region" description="Basic and acidic residues" evidence="5">
    <location>
        <begin position="1521"/>
        <end position="1538"/>
    </location>
</feature>
<feature type="compositionally biased region" description="Basic and acidic residues" evidence="5">
    <location>
        <begin position="1623"/>
        <end position="1632"/>
    </location>
</feature>
<feature type="modified residue" description="Phosphoserine" evidence="7">
    <location>
        <position position="1609"/>
    </location>
</feature>
<comment type="function">
    <text evidence="6">Scaffold protein involved in different aspects of polarized cells differentiation regulating epithelial and neuronal morphogenesis. Regulates the caudal migration of the nVII motor neurons. Required for convergent extension movements during gastrulation.</text>
</comment>
<comment type="subcellular location">
    <subcellularLocation>
        <location evidence="6">Cell membrane</location>
        <topology evidence="6">Peripheral membrane protein</topology>
    </subcellularLocation>
    <subcellularLocation>
        <location evidence="2">Cell junction</location>
    </subcellularLocation>
    <subcellularLocation>
        <location evidence="2">Cell junction</location>
        <location evidence="2">Adherens junction</location>
    </subcellularLocation>
    <subcellularLocation>
        <location evidence="2">Cell projection</location>
        <location evidence="2">Lamellipodium</location>
    </subcellularLocation>
    <subcellularLocation>
        <location evidence="2">Cytoplasm</location>
    </subcellularLocation>
    <subcellularLocation>
        <location evidence="2">Postsynapse</location>
    </subcellularLocation>
    <subcellularLocation>
        <location evidence="2">Presynapse</location>
    </subcellularLocation>
</comment>
<comment type="developmental stage">
    <text evidence="6">Expressed maternally during early embryonic stages. Initially expressed throughout the embryo then expression is restricted to the brain region.</text>
</comment>
<comment type="PTM">
    <text evidence="2">Palmitoylated.</text>
</comment>